<gene>
    <name type="primary">CHY1</name>
    <name type="ordered locus">At5g65940</name>
    <name type="ORF">K14B20.11</name>
</gene>
<organism>
    <name type="scientific">Arabidopsis thaliana</name>
    <name type="common">Mouse-ear cress</name>
    <dbReference type="NCBI Taxonomy" id="3702"/>
    <lineage>
        <taxon>Eukaryota</taxon>
        <taxon>Viridiplantae</taxon>
        <taxon>Streptophyta</taxon>
        <taxon>Embryophyta</taxon>
        <taxon>Tracheophyta</taxon>
        <taxon>Spermatophyta</taxon>
        <taxon>Magnoliopsida</taxon>
        <taxon>eudicotyledons</taxon>
        <taxon>Gunneridae</taxon>
        <taxon>Pentapetalae</taxon>
        <taxon>rosids</taxon>
        <taxon>malvids</taxon>
        <taxon>Brassicales</taxon>
        <taxon>Brassicaceae</taxon>
        <taxon>Camelineae</taxon>
        <taxon>Arabidopsis</taxon>
    </lineage>
</organism>
<feature type="initiator methionine" description="Removed" evidence="9">
    <location>
        <position position="1"/>
    </location>
</feature>
<feature type="chain" id="PRO_0000392977" description="3-hydroxyisobutyryl-CoA hydrolase 1">
    <location>
        <begin position="2"/>
        <end position="378"/>
    </location>
</feature>
<feature type="binding site" evidence="1">
    <location>
        <position position="94"/>
    </location>
    <ligand>
        <name>substrate</name>
    </ligand>
</feature>
<feature type="binding site" evidence="1">
    <location>
        <position position="119"/>
    </location>
    <ligand>
        <name>substrate</name>
    </ligand>
</feature>
<feature type="binding site" evidence="1">
    <location>
        <position position="142"/>
    </location>
    <ligand>
        <name>substrate</name>
    </ligand>
</feature>
<feature type="binding site" evidence="1">
    <location>
        <position position="150"/>
    </location>
    <ligand>
        <name>substrate</name>
    </ligand>
</feature>
<feature type="modified residue" description="N-acetylalanine" evidence="9">
    <location>
        <position position="2"/>
    </location>
</feature>
<feature type="splice variant" id="VSP_038860" description="In isoform 4." evidence="7">
    <location>
        <begin position="1"/>
        <end position="116"/>
    </location>
</feature>
<feature type="splice variant" id="VSP_038861" description="In isoform 3 and isoform 4." evidence="7">
    <original>GCRAILV</original>
    <variation>VLQAFSI</variation>
    <location>
        <begin position="322"/>
        <end position="328"/>
    </location>
</feature>
<feature type="splice variant" id="VSP_038862" description="In isoform 3 and isoform 4." evidence="7">
    <location>
        <begin position="329"/>
        <end position="378"/>
    </location>
</feature>
<feature type="splice variant" id="VSP_038863" description="In isoform 2." evidence="7">
    <original>WEPRRLE</original>
    <variation>ATGGHEG</variation>
    <location>
        <begin position="336"/>
        <end position="342"/>
    </location>
</feature>
<feature type="splice variant" id="VSP_038864" description="In isoform 2." evidence="7">
    <location>
        <begin position="343"/>
        <end position="378"/>
    </location>
</feature>
<feature type="mutagenesis site" description="Loss of activity." evidence="2">
    <original>G</original>
    <variation>S</variation>
    <location>
        <position position="70"/>
    </location>
</feature>
<feature type="mutagenesis site" description="Loss of activity." evidence="2">
    <original>E</original>
    <variation>A</variation>
    <location>
        <position position="142"/>
    </location>
</feature>
<feature type="mutagenesis site" description="Reduced activity." evidence="2">
    <original>D</original>
    <variation>G</variation>
    <location>
        <position position="150"/>
    </location>
</feature>
<accession>Q9LKJ1</accession>
<accession>A8MQ94</accession>
<accession>C0Z2V8</accession>
<accession>Q2V2U8</accession>
<proteinExistence type="evidence at protein level"/>
<sequence length="378" mass="42073">MAVEMASQSQVLVEEKSSVRILTLNRPKQLNALSFHMISRLLQLFLAFEEDPSVKLVILKGHGRAFCAGGDVAAVVRDINQGNWRLGANYFSSEYMLNYVMATYSKAQVSILNGIVMGGGAGVSVHGRFRIATENTVFAMPETALGLFPDVGASYFLSRLPGFFGEYVGLTGARLDGAEMLACGLATHFVPSTRLTALEADLCRINSNDPTFASTILDAYTQHPRLKQQSAYRRLDVIDRCFSRRTVEEIISALEREATQEADGWISATIQALKKGSPASLKISLRSIREGRLQGVGQCLIREYRMVCHVMKGEISKDFVEGCRAILVDKDKNPKWEPRRLEDMKDSMVEQYFERVEREDDLKLPPRNNLPALGIAKL</sequence>
<name>HIBC1_ARATH</name>
<protein>
    <recommendedName>
        <fullName>3-hydroxyisobutyryl-CoA hydrolase 1</fullName>
        <ecNumber>3.1.2.-</ecNumber>
        <ecNumber>3.1.2.4</ecNumber>
    </recommendedName>
    <alternativeName>
        <fullName>CoA-thioester hydrolase CHY1</fullName>
    </alternativeName>
</protein>
<keyword id="KW-0007">Acetylation</keyword>
<keyword id="KW-0025">Alternative splicing</keyword>
<keyword id="KW-0101">Branched-chain amino acid catabolism</keyword>
<keyword id="KW-0378">Hydrolase</keyword>
<keyword id="KW-0576">Peroxisome</keyword>
<keyword id="KW-1185">Reference proteome</keyword>
<evidence type="ECO:0000250" key="1"/>
<evidence type="ECO:0000269" key="2">
    <source>
    </source>
</evidence>
<evidence type="ECO:0000269" key="3">
    <source>
    </source>
</evidence>
<evidence type="ECO:0000269" key="4">
    <source>
    </source>
</evidence>
<evidence type="ECO:0000269" key="5">
    <source>
    </source>
</evidence>
<evidence type="ECO:0000269" key="6">
    <source>
    </source>
</evidence>
<evidence type="ECO:0000303" key="7">
    <source>
    </source>
</evidence>
<evidence type="ECO:0000305" key="8"/>
<evidence type="ECO:0007744" key="9">
    <source>
    </source>
</evidence>
<dbReference type="EC" id="3.1.2.-"/>
<dbReference type="EC" id="3.1.2.4"/>
<dbReference type="EMBL" id="AF276301">
    <property type="protein sequence ID" value="AAF77193.1"/>
    <property type="molecule type" value="mRNA"/>
</dbReference>
<dbReference type="EMBL" id="AB018108">
    <property type="protein sequence ID" value="BAB11141.1"/>
    <property type="molecule type" value="Genomic_DNA"/>
</dbReference>
<dbReference type="EMBL" id="CP002688">
    <property type="protein sequence ID" value="AED98128.1"/>
    <property type="molecule type" value="Genomic_DNA"/>
</dbReference>
<dbReference type="EMBL" id="CP002688">
    <property type="protein sequence ID" value="AED98129.1"/>
    <property type="molecule type" value="Genomic_DNA"/>
</dbReference>
<dbReference type="EMBL" id="CP002688">
    <property type="protein sequence ID" value="AED98130.1"/>
    <property type="molecule type" value="Genomic_DNA"/>
</dbReference>
<dbReference type="EMBL" id="CP002688">
    <property type="protein sequence ID" value="ANM68816.1"/>
    <property type="molecule type" value="Genomic_DNA"/>
</dbReference>
<dbReference type="EMBL" id="BT000956">
    <property type="protein sequence ID" value="AAN41356.1"/>
    <property type="molecule type" value="mRNA"/>
</dbReference>
<dbReference type="EMBL" id="AK316713">
    <property type="protein sequence ID" value="BAH19440.1"/>
    <property type="molecule type" value="mRNA"/>
</dbReference>
<dbReference type="EMBL" id="AK318922">
    <property type="protein sequence ID" value="BAH57037.1"/>
    <property type="molecule type" value="mRNA"/>
</dbReference>
<dbReference type="RefSeq" id="NP_001032155.1">
    <molecule id="Q9LKJ1-3"/>
    <property type="nucleotide sequence ID" value="NM_001037078.2"/>
</dbReference>
<dbReference type="RefSeq" id="NP_001078804.1">
    <molecule id="Q9LKJ1-2"/>
    <property type="nucleotide sequence ID" value="NM_001085335.1"/>
</dbReference>
<dbReference type="RefSeq" id="NP_001330538.1">
    <molecule id="Q9LKJ1-1"/>
    <property type="nucleotide sequence ID" value="NM_001345728.1"/>
</dbReference>
<dbReference type="RefSeq" id="NP_201395.1">
    <molecule id="Q9LKJ1-1"/>
    <property type="nucleotide sequence ID" value="NM_125991.4"/>
</dbReference>
<dbReference type="SMR" id="Q9LKJ1"/>
<dbReference type="BioGRID" id="21966">
    <property type="interactions" value="12"/>
</dbReference>
<dbReference type="FunCoup" id="Q9LKJ1">
    <property type="interactions" value="3275"/>
</dbReference>
<dbReference type="IntAct" id="Q9LKJ1">
    <property type="interactions" value="12"/>
</dbReference>
<dbReference type="STRING" id="3702.Q9LKJ1"/>
<dbReference type="iPTMnet" id="Q9LKJ1"/>
<dbReference type="PaxDb" id="3702-AT5G65940.1"/>
<dbReference type="ProteomicsDB" id="230321">
    <molecule id="Q9LKJ1-1"/>
</dbReference>
<dbReference type="EnsemblPlants" id="AT5G65940.1">
    <molecule id="Q9LKJ1-1"/>
    <property type="protein sequence ID" value="AT5G65940.1"/>
    <property type="gene ID" value="AT5G65940"/>
</dbReference>
<dbReference type="EnsemblPlants" id="AT5G65940.2">
    <molecule id="Q9LKJ1-3"/>
    <property type="protein sequence ID" value="AT5G65940.2"/>
    <property type="gene ID" value="AT5G65940"/>
</dbReference>
<dbReference type="EnsemblPlants" id="AT5G65940.3">
    <molecule id="Q9LKJ1-2"/>
    <property type="protein sequence ID" value="AT5G65940.3"/>
    <property type="gene ID" value="AT5G65940"/>
</dbReference>
<dbReference type="EnsemblPlants" id="AT5G65940.4">
    <molecule id="Q9LKJ1-1"/>
    <property type="protein sequence ID" value="AT5G65940.4"/>
    <property type="gene ID" value="AT5G65940"/>
</dbReference>
<dbReference type="GeneID" id="836724"/>
<dbReference type="Gramene" id="AT5G65940.1">
    <molecule id="Q9LKJ1-1"/>
    <property type="protein sequence ID" value="AT5G65940.1"/>
    <property type="gene ID" value="AT5G65940"/>
</dbReference>
<dbReference type="Gramene" id="AT5G65940.2">
    <molecule id="Q9LKJ1-3"/>
    <property type="protein sequence ID" value="AT5G65940.2"/>
    <property type="gene ID" value="AT5G65940"/>
</dbReference>
<dbReference type="Gramene" id="AT5G65940.3">
    <molecule id="Q9LKJ1-2"/>
    <property type="protein sequence ID" value="AT5G65940.3"/>
    <property type="gene ID" value="AT5G65940"/>
</dbReference>
<dbReference type="Gramene" id="AT5G65940.4">
    <molecule id="Q9LKJ1-1"/>
    <property type="protein sequence ID" value="AT5G65940.4"/>
    <property type="gene ID" value="AT5G65940"/>
</dbReference>
<dbReference type="KEGG" id="ath:AT5G65940"/>
<dbReference type="Araport" id="AT5G65940"/>
<dbReference type="TAIR" id="AT5G65940">
    <property type="gene designation" value="CHY1"/>
</dbReference>
<dbReference type="eggNOG" id="ENOG502RY3N">
    <property type="taxonomic scope" value="Eukaryota"/>
</dbReference>
<dbReference type="InParanoid" id="Q9LKJ1"/>
<dbReference type="OMA" id="EVFTMEY"/>
<dbReference type="OrthoDB" id="16820at2759"/>
<dbReference type="PhylomeDB" id="Q9LKJ1"/>
<dbReference type="BioCyc" id="ARA:AT5G65940-MONOMER"/>
<dbReference type="BRENDA" id="3.1.2.4">
    <property type="organism ID" value="399"/>
</dbReference>
<dbReference type="SABIO-RK" id="Q9LKJ1"/>
<dbReference type="UniPathway" id="UPA00362"/>
<dbReference type="PRO" id="PR:Q9LKJ1"/>
<dbReference type="Proteomes" id="UP000006548">
    <property type="component" value="Chromosome 5"/>
</dbReference>
<dbReference type="ExpressionAtlas" id="Q9LKJ1">
    <property type="expression patterns" value="baseline and differential"/>
</dbReference>
<dbReference type="GO" id="GO:0005777">
    <property type="term" value="C:peroxisome"/>
    <property type="evidence" value="ECO:0007669"/>
    <property type="project" value="UniProtKB-SubCell"/>
</dbReference>
<dbReference type="GO" id="GO:0009536">
    <property type="term" value="C:plastid"/>
    <property type="evidence" value="ECO:0007005"/>
    <property type="project" value="TAIR"/>
</dbReference>
<dbReference type="GO" id="GO:0003860">
    <property type="term" value="F:3-hydroxyisobutyryl-CoA hydrolase activity"/>
    <property type="evidence" value="ECO:0000314"/>
    <property type="project" value="UniProtKB"/>
</dbReference>
<dbReference type="GO" id="GO:0009409">
    <property type="term" value="P:response to cold"/>
    <property type="evidence" value="ECO:0000315"/>
    <property type="project" value="TAIR"/>
</dbReference>
<dbReference type="GO" id="GO:0006574">
    <property type="term" value="P:valine catabolic process"/>
    <property type="evidence" value="ECO:0000303"/>
    <property type="project" value="UniProtKB"/>
</dbReference>
<dbReference type="CDD" id="cd06558">
    <property type="entry name" value="crotonase-like"/>
    <property type="match status" value="1"/>
</dbReference>
<dbReference type="FunFam" id="3.90.226.10:FF:000027">
    <property type="entry name" value="Probable 3-hydroxyisobutyryl-CoA hydrolase 2"/>
    <property type="match status" value="1"/>
</dbReference>
<dbReference type="Gene3D" id="3.90.226.10">
    <property type="entry name" value="2-enoyl-CoA Hydratase, Chain A, domain 1"/>
    <property type="match status" value="1"/>
</dbReference>
<dbReference type="InterPro" id="IPR029045">
    <property type="entry name" value="ClpP/crotonase-like_dom_sf"/>
</dbReference>
<dbReference type="InterPro" id="IPR045004">
    <property type="entry name" value="ECH_dom"/>
</dbReference>
<dbReference type="InterPro" id="IPR032259">
    <property type="entry name" value="HIBYL-CoA-H"/>
</dbReference>
<dbReference type="NCBIfam" id="NF004127">
    <property type="entry name" value="PRK05617.1"/>
    <property type="match status" value="1"/>
</dbReference>
<dbReference type="PANTHER" id="PTHR43176:SF3">
    <property type="entry name" value="3-HYDROXYISOBUTYRYL-COA HYDROLASE, MITOCHONDRIAL"/>
    <property type="match status" value="1"/>
</dbReference>
<dbReference type="PANTHER" id="PTHR43176">
    <property type="entry name" value="3-HYDROXYISOBUTYRYL-COA HYDROLASE-RELATED"/>
    <property type="match status" value="1"/>
</dbReference>
<dbReference type="Pfam" id="PF16113">
    <property type="entry name" value="ECH_2"/>
    <property type="match status" value="1"/>
</dbReference>
<dbReference type="SUPFAM" id="SSF52096">
    <property type="entry name" value="ClpP/crotonase"/>
    <property type="match status" value="1"/>
</dbReference>
<comment type="function">
    <text evidence="2 3 4 5 6">Involved in valine catabolism. May be indirectly involved in benzoic acid biosynthesis and in cold signaling and cold tolerance.</text>
</comment>
<comment type="catalytic activity">
    <reaction evidence="2">
        <text>3-hydroxy-2-methylpropanoyl-CoA + H2O = 3-hydroxy-2-methylpropanoate + CoA + H(+)</text>
        <dbReference type="Rhea" id="RHEA:20888"/>
        <dbReference type="ChEBI" id="CHEBI:11805"/>
        <dbReference type="ChEBI" id="CHEBI:15377"/>
        <dbReference type="ChEBI" id="CHEBI:15378"/>
        <dbReference type="ChEBI" id="CHEBI:57287"/>
        <dbReference type="ChEBI" id="CHEBI:57340"/>
        <dbReference type="EC" id="3.1.2.4"/>
    </reaction>
</comment>
<comment type="activity regulation">
    <text>Inhibited by copper.</text>
</comment>
<comment type="biophysicochemical properties">
    <kinetics>
        <KM evidence="2 6">3.7 uM for 3-hydroxyisobutyryl-CoA</KM>
        <KM evidence="2 6">2.9 uM for cinnamoyl-CoA</KM>
        <Vmax evidence="2 6">24.2 umol/min/mg enzyme toward 3-hydroxyisobutyryl-CoA</Vmax>
        <Vmax evidence="2 6">12.6 umol/sec/mg enzyme toward cinnamoyl-CoA</Vmax>
        <text>Can also use 3-hydroxy-3-phenoylpropionoyl-CoA and p-coumaroyl-CoA as substrates, but not benzoyl-CoA.</text>
    </kinetics>
    <phDependence>
        <text evidence="2 6">Optimum pH is 7-9.</text>
    </phDependence>
</comment>
<comment type="pathway">
    <text>Amino-acid degradation; L-valine degradation.</text>
</comment>
<comment type="subcellular location">
    <subcellularLocation>
        <location evidence="8">Peroxisome</location>
    </subcellularLocation>
</comment>
<comment type="alternative products">
    <event type="alternative splicing"/>
    <isoform>
        <id>Q9LKJ1-1</id>
        <name>1</name>
        <sequence type="displayed"/>
    </isoform>
    <isoform>
        <id>Q9LKJ1-2</id>
        <name>2</name>
        <sequence type="described" ref="VSP_038863 VSP_038864"/>
    </isoform>
    <isoform>
        <id>Q9LKJ1-3</id>
        <name>3</name>
        <sequence type="described" ref="VSP_038861 VSP_038862"/>
    </isoform>
    <isoform>
        <id>Q9LKJ1-4</id>
        <name>4</name>
        <sequence type="described" ref="VSP_038860 VSP_038861 VSP_038862"/>
    </isoform>
</comment>
<comment type="tissue specificity">
    <text evidence="3">Expressed in roots, leaves, flowers and siliques.</text>
</comment>
<comment type="developmental stage">
    <text evidence="3">Induced during post-germinative growth. Detected in imbibed seeds.</text>
</comment>
<comment type="induction">
    <text evidence="3">Down-regulated by sugar.</text>
</comment>
<comment type="disruption phenotype">
    <text evidence="2 3 6">Resistant to inhibition of root elongation and promotion of lateral root formation by the auxin precursor indole-3-butyric acid (IBA). Deficiency of benzoic acid-containing glucosinolates in the seeds. Resistance to the pro-herbicide 2,4-dichlorophenoxybutyric acid (2,4-DB).</text>
</comment>
<comment type="miscellaneous">
    <text>Loss of function mutants are defective in beta-oxidization of fatty acids and in the conversion of indole-3-butyric acid (IBA) to indole-3-acetic acid (IAA). These inhibitions may be due to the accumulation of a toxic intermediate. The mutants are also less tolerant to freezing stress after cold acclimation.</text>
</comment>
<comment type="similarity">
    <text evidence="8">Belongs to the enoyl-CoA hydratase/isomerase family.</text>
</comment>
<reference key="1">
    <citation type="journal article" date="2001" name="J. Biol. Chem.">
        <title>chy1, an Arabidopsis mutant with impaired beta-oxidation, is defective in a peroxisomal beta-hydroxyisobutyryl-CoA hydrolase.</title>
        <authorList>
            <person name="Zolman B.K."/>
            <person name="Monroe-Augustus M."/>
            <person name="Thompson B."/>
            <person name="Hawes J.W."/>
            <person name="Krukenberg K.A."/>
            <person name="Matsuda S.P."/>
            <person name="Bartel B."/>
        </authorList>
    </citation>
    <scope>NUCLEOTIDE SEQUENCE [MRNA]</scope>
    <scope>FUNCTION</scope>
    <scope>CATALYTIC ACTIVITY</scope>
    <scope>BIOPHYSICOCHEMICAL PROPERTIES</scope>
    <scope>MUTAGENESIS OF GLY-70; GLU-142 AND ASP-150</scope>
    <scope>DISRUPTION PHENOTYPE</scope>
</reference>
<reference key="2">
    <citation type="journal article" date="2000" name="DNA Res.">
        <title>Structural analysis of Arabidopsis thaliana chromosome 5. X. Sequence features of the regions of 3,076,755 bp covered by sixty P1 and TAC clones.</title>
        <authorList>
            <person name="Sato S."/>
            <person name="Nakamura Y."/>
            <person name="Kaneko T."/>
            <person name="Katoh T."/>
            <person name="Asamizu E."/>
            <person name="Kotani H."/>
            <person name="Tabata S."/>
        </authorList>
    </citation>
    <scope>NUCLEOTIDE SEQUENCE [LARGE SCALE GENOMIC DNA]</scope>
    <source>
        <strain>cv. Columbia</strain>
    </source>
</reference>
<reference key="3">
    <citation type="journal article" date="2017" name="Plant J.">
        <title>Araport11: a complete reannotation of the Arabidopsis thaliana reference genome.</title>
        <authorList>
            <person name="Cheng C.Y."/>
            <person name="Krishnakumar V."/>
            <person name="Chan A.P."/>
            <person name="Thibaud-Nissen F."/>
            <person name="Schobel S."/>
            <person name="Town C.D."/>
        </authorList>
    </citation>
    <scope>GENOME REANNOTATION</scope>
    <source>
        <strain>cv. Columbia</strain>
    </source>
</reference>
<reference key="4">
    <citation type="journal article" date="2003" name="Science">
        <title>Empirical analysis of transcriptional activity in the Arabidopsis genome.</title>
        <authorList>
            <person name="Yamada K."/>
            <person name="Lim J."/>
            <person name="Dale J.M."/>
            <person name="Chen H."/>
            <person name="Shinn P."/>
            <person name="Palm C.J."/>
            <person name="Southwick A.M."/>
            <person name="Wu H.C."/>
            <person name="Kim C.J."/>
            <person name="Nguyen M."/>
            <person name="Pham P.K."/>
            <person name="Cheuk R.F."/>
            <person name="Karlin-Newmann G."/>
            <person name="Liu S.X."/>
            <person name="Lam B."/>
            <person name="Sakano H."/>
            <person name="Wu T."/>
            <person name="Yu G."/>
            <person name="Miranda M."/>
            <person name="Quach H.L."/>
            <person name="Tripp M."/>
            <person name="Chang C.H."/>
            <person name="Lee J.M."/>
            <person name="Toriumi M.J."/>
            <person name="Chan M.M."/>
            <person name="Tang C.C."/>
            <person name="Onodera C.S."/>
            <person name="Deng J.M."/>
            <person name="Akiyama K."/>
            <person name="Ansari Y."/>
            <person name="Arakawa T."/>
            <person name="Banh J."/>
            <person name="Banno F."/>
            <person name="Bowser L."/>
            <person name="Brooks S.Y."/>
            <person name="Carninci P."/>
            <person name="Chao Q."/>
            <person name="Choy N."/>
            <person name="Enju A."/>
            <person name="Goldsmith A.D."/>
            <person name="Gurjal M."/>
            <person name="Hansen N.F."/>
            <person name="Hayashizaki Y."/>
            <person name="Johnson-Hopson C."/>
            <person name="Hsuan V.W."/>
            <person name="Iida K."/>
            <person name="Karnes M."/>
            <person name="Khan S."/>
            <person name="Koesema E."/>
            <person name="Ishida J."/>
            <person name="Jiang P.X."/>
            <person name="Jones T."/>
            <person name="Kawai J."/>
            <person name="Kamiya A."/>
            <person name="Meyers C."/>
            <person name="Nakajima M."/>
            <person name="Narusaka M."/>
            <person name="Seki M."/>
            <person name="Sakurai T."/>
            <person name="Satou M."/>
            <person name="Tamse R."/>
            <person name="Vaysberg M."/>
            <person name="Wallender E.K."/>
            <person name="Wong C."/>
            <person name="Yamamura Y."/>
            <person name="Yuan S."/>
            <person name="Shinozaki K."/>
            <person name="Davis R.W."/>
            <person name="Theologis A."/>
            <person name="Ecker J.R."/>
        </authorList>
    </citation>
    <scope>NUCLEOTIDE SEQUENCE [LARGE SCALE MRNA] (ISOFORM 1)</scope>
    <source>
        <strain>cv. Columbia</strain>
    </source>
</reference>
<reference key="5">
    <citation type="journal article" date="2009" name="DNA Res.">
        <title>Analysis of multiple occurrences of alternative splicing events in Arabidopsis thaliana using novel sequenced full-length cDNAs.</title>
        <authorList>
            <person name="Iida K."/>
            <person name="Fukami-Kobayashi K."/>
            <person name="Toyoda A."/>
            <person name="Sakaki Y."/>
            <person name="Kobayashi M."/>
            <person name="Seki M."/>
            <person name="Shinozaki K."/>
        </authorList>
    </citation>
    <scope>NUCLEOTIDE SEQUENCE [LARGE SCALE MRNA] (ISOFORMS 2 AND 4)</scope>
    <source>
        <strain>cv. Columbia</strain>
    </source>
</reference>
<reference key="6">
    <citation type="journal article" date="2004" name="FEBS Lett.">
        <title>An Arabidopsis mutant disrupted in valine catabolism is also compromised in peroxisomal fatty acid beta-oxidation.</title>
        <authorList>
            <person name="Lange P.R."/>
            <person name="Eastmond P.J."/>
            <person name="Madagan K."/>
            <person name="Graham I.A."/>
        </authorList>
    </citation>
    <scope>FUNCTION</scope>
    <scope>DISRUPTION PHENOTYPE</scope>
    <scope>INDUCTION</scope>
    <scope>DEVELOPMENTAL STAGE</scope>
    <scope>TISSUE SPECIFICITY</scope>
</reference>
<reference key="7">
    <citation type="journal article" date="2007" name="J. Biol. Chem.">
        <title>Peroxisomal metabolism of propionic acid and isobutyric acid in plants.</title>
        <authorList>
            <person name="Lucas K.A."/>
            <person name="Filley J.R."/>
            <person name="Erb J.M."/>
            <person name="Graybill E.R."/>
            <person name="Hawes J.W."/>
        </authorList>
    </citation>
    <scope>FUNCTION</scope>
</reference>
<reference key="8">
    <citation type="journal article" date="2009" name="Mol. Plant">
        <title>Disruption of Arabidopsis CHY1 reveals an important role of metabolic status in plant cold stress signaling.</title>
        <authorList>
            <person name="Dong C.H."/>
            <person name="Zolman B.K."/>
            <person name="Bartel B."/>
            <person name="Lee B.H."/>
            <person name="Stevenson B."/>
            <person name="Agarwal M."/>
            <person name="Zhu J.K."/>
        </authorList>
    </citation>
    <scope>FUNCTION</scope>
</reference>
<reference key="9">
    <citation type="journal article" date="2009" name="Plant Biol.">
        <title>Arabidopsis Chy1 null mutants are deficient in benzoic acid-containing glucosinolates in the seeds.</title>
        <authorList>
            <person name="Ibdah M."/>
            <person name="Pichersky E."/>
        </authorList>
    </citation>
    <scope>FUNCTION</scope>
    <scope>DISRUPTION PHENOTYPE</scope>
    <scope>BIOPHYSICOCHEMICAL PROPERTIES</scope>
</reference>
<reference key="10">
    <citation type="journal article" date="2012" name="Mol. Cell. Proteomics">
        <title>Comparative large-scale characterisation of plant vs. mammal proteins reveals similar and idiosyncratic N-alpha acetylation features.</title>
        <authorList>
            <person name="Bienvenut W.V."/>
            <person name="Sumpton D."/>
            <person name="Martinez A."/>
            <person name="Lilla S."/>
            <person name="Espagne C."/>
            <person name="Meinnel T."/>
            <person name="Giglione C."/>
        </authorList>
    </citation>
    <scope>ACETYLATION [LARGE SCALE ANALYSIS] AT ALA-2</scope>
    <scope>CLEAVAGE OF INITIATOR METHIONINE [LARGE SCALE ANALYSIS]</scope>
    <scope>IDENTIFICATION BY MASS SPECTROMETRY [LARGE SCALE ANALYSIS]</scope>
</reference>